<sequence length="347" mass="38784">MRHGDISSSNDTVGVAVVNYKMPRLHTRDEVLENARKIADIIVGMKQGLPGMDLVIFPEYSLQGIMYDPAEMMETAVAIPGVETEVFAQACRKANVWGVFSLTGERHEEHPRKSPYNTLVLIDNNGEIVQKYRKIIPWCPIEGWYPGDQTYVADGPKGLKISMIICDDGNYPEIWRDCAMKGAELIVRCQGYMYPAKDQQVLMAKAMAWANNCYVAVANAAGFDGVYSYFGHSAIIGFDGRTLGECGEEEMGIQYAQLSISQIRDARQNDQSQNHLYKILHRGYSGMHLSGDGDRGIAECPFEFYRTWVLDAEKARENVEALTRRTSGVAQCPVGSLPYDAKEKEAR</sequence>
<reference key="1">
    <citation type="submission" date="2007-05" db="EMBL/GenBank/DDBJ databases">
        <title>Complete sequence of Pseudomonas putida F1.</title>
        <authorList>
            <consortium name="US DOE Joint Genome Institute"/>
            <person name="Copeland A."/>
            <person name="Lucas S."/>
            <person name="Lapidus A."/>
            <person name="Barry K."/>
            <person name="Detter J.C."/>
            <person name="Glavina del Rio T."/>
            <person name="Hammon N."/>
            <person name="Israni S."/>
            <person name="Dalin E."/>
            <person name="Tice H."/>
            <person name="Pitluck S."/>
            <person name="Chain P."/>
            <person name="Malfatti S."/>
            <person name="Shin M."/>
            <person name="Vergez L."/>
            <person name="Schmutz J."/>
            <person name="Larimer F."/>
            <person name="Land M."/>
            <person name="Hauser L."/>
            <person name="Kyrpides N."/>
            <person name="Lykidis A."/>
            <person name="Parales R."/>
            <person name="Richardson P."/>
        </authorList>
    </citation>
    <scope>NUCLEOTIDE SEQUENCE [LARGE SCALE GENOMIC DNA]</scope>
    <source>
        <strain>ATCC 700007 / DSM 6899 / JCM 31910 / BCRC 17059 / LMG 24140 / F1</strain>
    </source>
</reference>
<comment type="function">
    <text evidence="1">Catalyzes the hydrolysis of short-chain aliphatic amides to their corresponding organic acids with release of ammonia.</text>
</comment>
<comment type="function">
    <text evidence="1">Also exhibits in vitro acyl transferase activity, transferring the acyl moiety of short-chain amides to hydroxylamine to form hydroxamates.</text>
</comment>
<comment type="catalytic activity">
    <reaction evidence="1">
        <text>a monocarboxylic acid amide + H2O = a monocarboxylate + NH4(+)</text>
        <dbReference type="Rhea" id="RHEA:12020"/>
        <dbReference type="ChEBI" id="CHEBI:15377"/>
        <dbReference type="ChEBI" id="CHEBI:28938"/>
        <dbReference type="ChEBI" id="CHEBI:35757"/>
        <dbReference type="ChEBI" id="CHEBI:83628"/>
        <dbReference type="EC" id="3.5.1.4"/>
    </reaction>
</comment>
<comment type="similarity">
    <text evidence="1">Belongs to the carbon-nitrogen hydrolase superfamily. Aliphatic amidase family.</text>
</comment>
<name>AMIE_PSEP1</name>
<evidence type="ECO:0000255" key="1">
    <source>
        <dbReference type="HAMAP-Rule" id="MF_01242"/>
    </source>
</evidence>
<evidence type="ECO:0000255" key="2">
    <source>
        <dbReference type="PROSITE-ProRule" id="PRU00054"/>
    </source>
</evidence>
<accession>A5W2C0</accession>
<protein>
    <recommendedName>
        <fullName evidence="1">Aliphatic amidase</fullName>
        <ecNumber evidence="1">3.5.1.4</ecNumber>
    </recommendedName>
    <alternativeName>
        <fullName evidence="1">Acylamide amidohydrolase</fullName>
    </alternativeName>
</protein>
<proteinExistence type="inferred from homology"/>
<feature type="chain" id="PRO_1000067053" description="Aliphatic amidase">
    <location>
        <begin position="1"/>
        <end position="347"/>
    </location>
</feature>
<feature type="domain" description="CN hydrolase" evidence="2">
    <location>
        <begin position="13"/>
        <end position="260"/>
    </location>
</feature>
<feature type="active site" description="Proton acceptor" evidence="1">
    <location>
        <position position="59"/>
    </location>
</feature>
<feature type="active site" description="Proton donor" evidence="1">
    <location>
        <position position="134"/>
    </location>
</feature>
<feature type="active site" description="Nucleophile" evidence="1">
    <location>
        <position position="166"/>
    </location>
</feature>
<dbReference type="EC" id="3.5.1.4" evidence="1"/>
<dbReference type="EMBL" id="CP000712">
    <property type="protein sequence ID" value="ABQ78280.1"/>
    <property type="molecule type" value="Genomic_DNA"/>
</dbReference>
<dbReference type="SMR" id="A5W2C0"/>
<dbReference type="KEGG" id="ppf:Pput_2141"/>
<dbReference type="eggNOG" id="COG0388">
    <property type="taxonomic scope" value="Bacteria"/>
</dbReference>
<dbReference type="HOGENOM" id="CLU_071797_0_0_6"/>
<dbReference type="GO" id="GO:0004040">
    <property type="term" value="F:amidase activity"/>
    <property type="evidence" value="ECO:0007669"/>
    <property type="project" value="UniProtKB-UniRule"/>
</dbReference>
<dbReference type="CDD" id="cd07565">
    <property type="entry name" value="aliphatic_amidase"/>
    <property type="match status" value="1"/>
</dbReference>
<dbReference type="FunFam" id="3.60.110.10:FF:000014">
    <property type="entry name" value="Aliphatic amidase"/>
    <property type="match status" value="1"/>
</dbReference>
<dbReference type="Gene3D" id="3.60.110.10">
    <property type="entry name" value="Carbon-nitrogen hydrolase"/>
    <property type="match status" value="1"/>
</dbReference>
<dbReference type="HAMAP" id="MF_01242">
    <property type="entry name" value="Aliphatic_amidase"/>
    <property type="match status" value="1"/>
</dbReference>
<dbReference type="InterPro" id="IPR050345">
    <property type="entry name" value="Aliph_Amidase/BUP"/>
</dbReference>
<dbReference type="InterPro" id="IPR023719">
    <property type="entry name" value="Aliphatic_amidase"/>
</dbReference>
<dbReference type="InterPro" id="IPR003010">
    <property type="entry name" value="C-N_Hydrolase"/>
</dbReference>
<dbReference type="InterPro" id="IPR036526">
    <property type="entry name" value="C-N_Hydrolase_sf"/>
</dbReference>
<dbReference type="NCBIfam" id="NF009802">
    <property type="entry name" value="PRK13286.1"/>
    <property type="match status" value="1"/>
</dbReference>
<dbReference type="PANTHER" id="PTHR43674:SF14">
    <property type="entry name" value="ALIPHATIC AMIDASE"/>
    <property type="match status" value="1"/>
</dbReference>
<dbReference type="PANTHER" id="PTHR43674">
    <property type="entry name" value="NITRILASE C965.09-RELATED"/>
    <property type="match status" value="1"/>
</dbReference>
<dbReference type="Pfam" id="PF00795">
    <property type="entry name" value="CN_hydrolase"/>
    <property type="match status" value="1"/>
</dbReference>
<dbReference type="SUPFAM" id="SSF56317">
    <property type="entry name" value="Carbon-nitrogen hydrolase"/>
    <property type="match status" value="1"/>
</dbReference>
<dbReference type="PROSITE" id="PS50263">
    <property type="entry name" value="CN_HYDROLASE"/>
    <property type="match status" value="1"/>
</dbReference>
<keyword id="KW-0378">Hydrolase</keyword>
<organism>
    <name type="scientific">Pseudomonas putida (strain ATCC 700007 / DSM 6899 / JCM 31910 / BCRC 17059 / LMG 24140 / F1)</name>
    <dbReference type="NCBI Taxonomy" id="351746"/>
    <lineage>
        <taxon>Bacteria</taxon>
        <taxon>Pseudomonadati</taxon>
        <taxon>Pseudomonadota</taxon>
        <taxon>Gammaproteobacteria</taxon>
        <taxon>Pseudomonadales</taxon>
        <taxon>Pseudomonadaceae</taxon>
        <taxon>Pseudomonas</taxon>
    </lineage>
</organism>
<gene>
    <name evidence="1" type="primary">amiE</name>
    <name type="ordered locus">Pput_2141</name>
</gene>